<proteinExistence type="inferred from homology"/>
<organism evidence="9">
    <name type="scientific">Caenorhabditis elegans</name>
    <dbReference type="NCBI Taxonomy" id="6239"/>
    <lineage>
        <taxon>Eukaryota</taxon>
        <taxon>Metazoa</taxon>
        <taxon>Ecdysozoa</taxon>
        <taxon>Nematoda</taxon>
        <taxon>Chromadorea</taxon>
        <taxon>Rhabditida</taxon>
        <taxon>Rhabditina</taxon>
        <taxon>Rhabditomorpha</taxon>
        <taxon>Rhabditoidea</taxon>
        <taxon>Rhabditidae</taxon>
        <taxon>Peloderinae</taxon>
        <taxon>Caenorhabditis</taxon>
    </lineage>
</organism>
<protein>
    <recommendedName>
        <fullName evidence="8">Putative aminopeptidase-2</fullName>
        <ecNumber evidence="3">3.4.11.-</ecNumber>
    </recommendedName>
</protein>
<dbReference type="EC" id="3.4.11.-" evidence="3"/>
<dbReference type="EMBL" id="BX284603">
    <property type="protein sequence ID" value="CAA82971.4"/>
    <property type="molecule type" value="Genomic_DNA"/>
</dbReference>
<dbReference type="PIR" id="H88572">
    <property type="entry name" value="H88572"/>
</dbReference>
<dbReference type="PIR" id="S42841">
    <property type="entry name" value="S42841"/>
</dbReference>
<dbReference type="PIR" id="S42842">
    <property type="entry name" value="S42842"/>
</dbReference>
<dbReference type="RefSeq" id="NP_499230.2">
    <property type="nucleotide sequence ID" value="NM_066829.4"/>
</dbReference>
<dbReference type="SMR" id="Q22531"/>
<dbReference type="FunCoup" id="Q22531">
    <property type="interactions" value="42"/>
</dbReference>
<dbReference type="STRING" id="6239.T16G12.1.1"/>
<dbReference type="MEROPS" id="M01.A21"/>
<dbReference type="PaxDb" id="6239-T16G12.1"/>
<dbReference type="PeptideAtlas" id="Q22531"/>
<dbReference type="EnsemblMetazoa" id="T16G12.1.1">
    <property type="protein sequence ID" value="T16G12.1.1"/>
    <property type="gene ID" value="WBGene00011803"/>
</dbReference>
<dbReference type="GeneID" id="176416"/>
<dbReference type="KEGG" id="cel:CELE_T16G12.1"/>
<dbReference type="UCSC" id="T16G12.1">
    <property type="organism name" value="c. elegans"/>
</dbReference>
<dbReference type="AGR" id="WB:WBGene00011803"/>
<dbReference type="CTD" id="176416"/>
<dbReference type="WormBase" id="T16G12.1">
    <property type="protein sequence ID" value="CE36716"/>
    <property type="gene ID" value="WBGene00011803"/>
</dbReference>
<dbReference type="eggNOG" id="KOG1046">
    <property type="taxonomic scope" value="Eukaryota"/>
</dbReference>
<dbReference type="HOGENOM" id="CLU_233816_0_0_1"/>
<dbReference type="InParanoid" id="Q22531"/>
<dbReference type="OMA" id="IALKYDC"/>
<dbReference type="OrthoDB" id="5868348at2759"/>
<dbReference type="PhylomeDB" id="Q22531"/>
<dbReference type="Reactome" id="R-CEL-2022377">
    <property type="pathway name" value="Metabolism of Angiotensinogen to Angiotensins"/>
</dbReference>
<dbReference type="Reactome" id="R-CEL-983168">
    <property type="pathway name" value="Antigen processing: Ubiquitination &amp; Proteasome degradation"/>
</dbReference>
<dbReference type="Reactome" id="R-CEL-983170">
    <property type="pathway name" value="Antigen Presentation: Folding, assembly and peptide loading of class I MHC"/>
</dbReference>
<dbReference type="PRO" id="PR:Q22531"/>
<dbReference type="Proteomes" id="UP000001940">
    <property type="component" value="Chromosome III"/>
</dbReference>
<dbReference type="Bgee" id="WBGene00011803">
    <property type="expression patterns" value="Expressed in larva and 2 other cell types or tissues"/>
</dbReference>
<dbReference type="GO" id="GO:0005737">
    <property type="term" value="C:cytoplasm"/>
    <property type="evidence" value="ECO:0000318"/>
    <property type="project" value="GO_Central"/>
</dbReference>
<dbReference type="GO" id="GO:0005615">
    <property type="term" value="C:extracellular space"/>
    <property type="evidence" value="ECO:0000318"/>
    <property type="project" value="GO_Central"/>
</dbReference>
<dbReference type="GO" id="GO:0016020">
    <property type="term" value="C:membrane"/>
    <property type="evidence" value="ECO:0000318"/>
    <property type="project" value="GO_Central"/>
</dbReference>
<dbReference type="GO" id="GO:0070006">
    <property type="term" value="F:metalloaminopeptidase activity"/>
    <property type="evidence" value="ECO:0000318"/>
    <property type="project" value="GO_Central"/>
</dbReference>
<dbReference type="GO" id="GO:0042277">
    <property type="term" value="F:peptide binding"/>
    <property type="evidence" value="ECO:0000318"/>
    <property type="project" value="GO_Central"/>
</dbReference>
<dbReference type="GO" id="GO:0008270">
    <property type="term" value="F:zinc ion binding"/>
    <property type="evidence" value="ECO:0000318"/>
    <property type="project" value="GO_Central"/>
</dbReference>
<dbReference type="GO" id="GO:0009792">
    <property type="term" value="P:embryo development ending in birth or egg hatching"/>
    <property type="evidence" value="ECO:0000316"/>
    <property type="project" value="UniProtKB"/>
</dbReference>
<dbReference type="GO" id="GO:0048477">
    <property type="term" value="P:oogenesis"/>
    <property type="evidence" value="ECO:0007669"/>
    <property type="project" value="UniProtKB-KW"/>
</dbReference>
<dbReference type="GO" id="GO:0043171">
    <property type="term" value="P:peptide catabolic process"/>
    <property type="evidence" value="ECO:0000318"/>
    <property type="project" value="GO_Central"/>
</dbReference>
<dbReference type="GO" id="GO:0006508">
    <property type="term" value="P:proteolysis"/>
    <property type="evidence" value="ECO:0000318"/>
    <property type="project" value="GO_Central"/>
</dbReference>
<dbReference type="GO" id="GO:0046662">
    <property type="term" value="P:regulation of egg-laying behavior"/>
    <property type="evidence" value="ECO:0000315"/>
    <property type="project" value="UniProtKB"/>
</dbReference>
<dbReference type="GO" id="GO:1903538">
    <property type="term" value="P:regulation of meiotic cell cycle process involved in oocyte maturation"/>
    <property type="evidence" value="ECO:0000315"/>
    <property type="project" value="UniProtKB"/>
</dbReference>
<dbReference type="CDD" id="cd09601">
    <property type="entry name" value="M1_APN-Q_like"/>
    <property type="match status" value="2"/>
</dbReference>
<dbReference type="FunFam" id="1.10.390.10:FF:000043">
    <property type="entry name" value="Putative aminopeptidase-2"/>
    <property type="match status" value="2"/>
</dbReference>
<dbReference type="FunFam" id="2.60.40.1730:FF:000035">
    <property type="entry name" value="Putative aminopeptidase-2"/>
    <property type="match status" value="1"/>
</dbReference>
<dbReference type="Gene3D" id="1.25.50.20">
    <property type="match status" value="2"/>
</dbReference>
<dbReference type="Gene3D" id="1.10.390.10">
    <property type="entry name" value="Neutral Protease Domain 2"/>
    <property type="match status" value="2"/>
</dbReference>
<dbReference type="Gene3D" id="2.60.40.1730">
    <property type="entry name" value="tricorn interacting facor f3 domain"/>
    <property type="match status" value="2"/>
</dbReference>
<dbReference type="InterPro" id="IPR045357">
    <property type="entry name" value="Aminopeptidase_N-like_N"/>
</dbReference>
<dbReference type="InterPro" id="IPR042097">
    <property type="entry name" value="Aminopeptidase_N-like_N_sf"/>
</dbReference>
<dbReference type="InterPro" id="IPR024571">
    <property type="entry name" value="ERAP1-like_C_dom"/>
</dbReference>
<dbReference type="InterPro" id="IPR034016">
    <property type="entry name" value="M1_APN-typ"/>
</dbReference>
<dbReference type="InterPro" id="IPR001930">
    <property type="entry name" value="Peptidase_M1"/>
</dbReference>
<dbReference type="InterPro" id="IPR050344">
    <property type="entry name" value="Peptidase_M1_aminopeptidases"/>
</dbReference>
<dbReference type="InterPro" id="IPR014782">
    <property type="entry name" value="Peptidase_M1_dom"/>
</dbReference>
<dbReference type="InterPro" id="IPR027268">
    <property type="entry name" value="Peptidase_M4/M1_CTD_sf"/>
</dbReference>
<dbReference type="PANTHER" id="PTHR11533:SF293">
    <property type="entry name" value="AMINOPEPTIDASE-2-RELATED"/>
    <property type="match status" value="1"/>
</dbReference>
<dbReference type="PANTHER" id="PTHR11533">
    <property type="entry name" value="PROTEASE M1 ZINC METALLOPROTEASE"/>
    <property type="match status" value="1"/>
</dbReference>
<dbReference type="Pfam" id="PF11838">
    <property type="entry name" value="ERAP1_C"/>
    <property type="match status" value="2"/>
</dbReference>
<dbReference type="Pfam" id="PF01433">
    <property type="entry name" value="Peptidase_M1"/>
    <property type="match status" value="2"/>
</dbReference>
<dbReference type="Pfam" id="PF17900">
    <property type="entry name" value="Peptidase_M1_N"/>
    <property type="match status" value="2"/>
</dbReference>
<dbReference type="PRINTS" id="PR00756">
    <property type="entry name" value="ALADIPTASE"/>
</dbReference>
<dbReference type="SUPFAM" id="SSF63737">
    <property type="entry name" value="Leukotriene A4 hydrolase N-terminal domain"/>
    <property type="match status" value="2"/>
</dbReference>
<dbReference type="SUPFAM" id="SSF55486">
    <property type="entry name" value="Metalloproteases ('zincins'), catalytic domain"/>
    <property type="match status" value="2"/>
</dbReference>
<dbReference type="PROSITE" id="PS00142">
    <property type="entry name" value="ZINC_PROTEASE"/>
    <property type="match status" value="2"/>
</dbReference>
<keyword id="KW-0031">Aminopeptidase</keyword>
<keyword id="KW-0221">Differentiation</keyword>
<keyword id="KW-0325">Glycoprotein</keyword>
<keyword id="KW-0378">Hydrolase</keyword>
<keyword id="KW-0479">Metal-binding</keyword>
<keyword id="KW-0482">Metalloprotease</keyword>
<keyword id="KW-0896">Oogenesis</keyword>
<keyword id="KW-0645">Protease</keyword>
<keyword id="KW-1185">Reference proteome</keyword>
<keyword id="KW-0732">Signal</keyword>
<keyword id="KW-0862">Zinc</keyword>
<accession>Q22531</accession>
<gene>
    <name evidence="10" type="ORF">T16G12.1</name>
</gene>
<sequence length="1890" mass="216241">MRRKLLLLLCFIGLFSLISTAPAPNNVGLESEFTEGHAETINLEEVEFNHPSILPEHPDNFRQDKLAARKRQSLYVTKTRLPPNLYAIDYSLWFQPYFPSPGVQYAPEKNFTFDGRASIQVEALVASDRFILNAYNFKIQSYKVVDIDGTVVPINSISQDDTTQQLSLITNANGVVAGQIYNIEFVYTGIINPYTDGGVYYTSYNDPQGNTHYMIATHMEPFSARKVFPSLDEPSYKAKFTITVQYPASQVALSNMMETEPTKIDNIWSTITFPQTPKMSSYLIAFAVGPYVNSQYVNKHNTLTRAWGWPGTEQYLQFAAQNAGECLYQLGEYTGIKFPLSKADQLGMPEFLAGAMENWGLIIYKYQYIAYNPTTMTTRNMEAAAKVMCHELAHQWFGDLVTTAWWDDLFLNEGFADYFMTFIQKSVYPQQATYLDTLQVLDELQVGLTADVRYDAHPLVYPDGPAFDDITYNKGASMLRMLSDVLGADVFKQGIRAYLQKMQYSNANDFDLFSTLTDTAKSNNILDWCGLPLNVTDFMQPYIHQTNHPLIRYNNNQKIGGSTFSQEPFLDISDLTATPWNYTWSIPLTSANLRHADPYKQWLPRQQGCANMNENIQEERIKEPNKRAVQWELTSITSATYGRIIYDDIGFDRILKLIKQDDINDNLKLTLLADEYNYMLREKKANRPFGYNRFLDLAKVIFNTQSFTNYPSYGVFAQAQPVLEQIAQLYRDGIDAEFVPRLYKLFFQNSYNQLKWQDTSIWDTDTFSEVFLPFAVRYDIGDVQNRTLNMFANVKSACINSLNGTAWCNPYSTNLRKAIYCGAAKYAPATSDYFFQMLHSYNKEVITNPYFYQEYMALLEGMSCTQSPATLKVLIRLFTTSTLNPSTIFGFLKYNPAASDVLYNYFMANPQLVNSTMLDAYLDAMTYNWNSYFREGQLSTLMNTLTLTNDQFDIFDFYINRVSLMFEYKSTYALPTYNWLYDNLVVIGKTPWEKTPNIDAVFPYYKLDLQVNIPGSGPYQWYENMTFSATSTVTFQLVSPTSSITINAHRLMFDPVSIRLYNENDENAHTPIPIDFSKVMKDYDKGTVTIPTMNNTVLYPNQYSLFIEYTGFIFQNPDEGDASNTYLGGLNNRKGWIFTTDFEGGPGARSLLPCWDEPSYKGQFEVSVFHPTDMIALSNEVDIQRTIYDNGWTTTKFATTNQMSTYLLALCVGHFSNLATVTRTGVLTRVWTWSGMEQYGEFALNVTAGTIDFMENYFSYDFPLKKLDVMALPEYTMNAGAMENWGLIIGEYSLFMFDPDYATTRDITEVAETTAHEVVHQWFGDIVTLDWWNDIFLNEGFAQYWFANGIDNTFPEQHAYSIDYNRFYMNHIALKYDCIPGVAKPVISDTPPVFGIEPYYKGSALLNLLNNVLTPAVFQEGLSSYLTQYGYVNASPRNLWTSLTVAAQRHNITDWNGQPLDVSSFMDPYTLQTSYPIITLTLRGTSTVQANQQSCMSDETLWNVPLFTQTPGALDFNWFVNFTGGNDATWLRPLPTGYRVDNAGSTSFARINYDDKSWYSIQAQLLSNMNTMSSTTRAMLLDDANFFYQSGRWEMTKFLDLTLYLVNEDSLAPWEQAIEFFTEMLNRFQYQPEIDTVRNYVIQITKNAVSKFQWNTNGLWANDRIVQLLVNVNNLAVNRQSRQVALTLFNNFVLKCKYSLSGTGKCSGIHPNLRQPTYCYGLRQSNNIDDFTTVNNLYSWFVQNAGYLQTDGSNLLNALGCVQNLDLQKTMLRSILSGDYPPSLLNSIAVHDDSSDVLYNFLLDNTQDILNAPFDFSLYVKAMFQNWSTSNQLELAKDFQNSSNYNLLNAAQKNIYKQGILTVNSNANWMLIYKTPFLEWIQKNFGAPNL</sequence>
<reference evidence="9" key="1">
    <citation type="journal article" date="1998" name="Science">
        <title>Genome sequence of the nematode C. elegans: a platform for investigating biology.</title>
        <authorList>
            <consortium name="The C. elegans sequencing consortium"/>
        </authorList>
    </citation>
    <scope>NUCLEOTIDE SEQUENCE [LARGE SCALE GENOMIC DNA]</scope>
    <source>
        <strain evidence="9">Bristol N2</strain>
    </source>
</reference>
<reference evidence="8" key="2">
    <citation type="journal article" date="2014" name="Dev. Genes Evol.">
        <title>Collaboration within the M1 aminopeptidase family promotes reproductive success in Caenorhabditis elegans.</title>
        <authorList>
            <person name="Althoff M.J."/>
            <person name="Flick K."/>
            <person name="Trzepacz C."/>
        </authorList>
    </citation>
    <scope>FUNCTION</scope>
    <scope>DISRUPTION PHENOTYPE</scope>
</reference>
<name>AMP2_CAEEL</name>
<comment type="function">
    <text evidence="7">Putative aminopeptidase which plays a role in oocyte maturation.</text>
</comment>
<comment type="cofactor">
    <cofactor evidence="1">
        <name>Zn(2+)</name>
        <dbReference type="ChEBI" id="CHEBI:29105"/>
    </cofactor>
    <text evidence="1">Binds 1 zinc ion per subunit.</text>
</comment>
<comment type="disruption phenotype">
    <text evidence="7">RNAi-mediated knockdown causes an expansion of the pachytene zone in the gonads of 31 percent of animals and a delay in oocyte nucleolus disassembly. Brood size is normal and embryos are viable.</text>
</comment>
<comment type="similarity">
    <text evidence="8">Belongs to the peptidase M1 family.</text>
</comment>
<evidence type="ECO:0000250" key="1">
    <source>
        <dbReference type="UniProtKB" id="P09960"/>
    </source>
</evidence>
<evidence type="ECO:0000250" key="2">
    <source>
        <dbReference type="UniProtKB" id="Q6P179"/>
    </source>
</evidence>
<evidence type="ECO:0000250" key="3">
    <source>
        <dbReference type="UniProtKB" id="Q6Q4G3"/>
    </source>
</evidence>
<evidence type="ECO:0000255" key="4"/>
<evidence type="ECO:0000255" key="5">
    <source>
        <dbReference type="PROSITE-ProRule" id="PRU00498"/>
    </source>
</evidence>
<evidence type="ECO:0000255" key="6">
    <source>
        <dbReference type="PROSITE-ProRule" id="PRU10095"/>
    </source>
</evidence>
<evidence type="ECO:0000269" key="7">
    <source>
    </source>
</evidence>
<evidence type="ECO:0000305" key="8"/>
<evidence type="ECO:0000312" key="9">
    <source>
        <dbReference type="Proteomes" id="UP000001940"/>
    </source>
</evidence>
<evidence type="ECO:0000312" key="10">
    <source>
        <dbReference type="WormBase" id="T16G12.1"/>
    </source>
</evidence>
<feature type="signal peptide" evidence="4">
    <location>
        <begin position="1"/>
        <end position="20"/>
    </location>
</feature>
<feature type="chain" id="PRO_5004200651" description="Putative aminopeptidase-2" evidence="4">
    <location>
        <begin position="21"/>
        <end position="1890"/>
    </location>
</feature>
<feature type="active site" description="Proton acceptor" evidence="6">
    <location>
        <position position="391"/>
    </location>
</feature>
<feature type="active site" description="Proton acceptor" evidence="6">
    <location>
        <position position="1317"/>
    </location>
</feature>
<feature type="binding site" evidence="2">
    <location>
        <position position="220"/>
    </location>
    <ligand>
        <name>substrate</name>
    </ligand>
</feature>
<feature type="binding site" evidence="2">
    <location>
        <begin position="354"/>
        <end position="358"/>
    </location>
    <ligand>
        <name>substrate</name>
    </ligand>
</feature>
<feature type="binding site" evidence="6">
    <location>
        <position position="390"/>
    </location>
    <ligand>
        <name>Zn(2+)</name>
        <dbReference type="ChEBI" id="CHEBI:29105"/>
        <note>catalytic</note>
    </ligand>
</feature>
<feature type="binding site" evidence="6">
    <location>
        <position position="394"/>
    </location>
    <ligand>
        <name>Zn(2+)</name>
        <dbReference type="ChEBI" id="CHEBI:29105"/>
        <note>catalytic</note>
    </ligand>
</feature>
<feature type="binding site" evidence="2">
    <location>
        <position position="413"/>
    </location>
    <ligand>
        <name>Zn(2+)</name>
        <dbReference type="ChEBI" id="CHEBI:29105"/>
        <note>catalytic</note>
    </ligand>
</feature>
<feature type="binding site" evidence="2">
    <location>
        <position position="1143"/>
    </location>
    <ligand>
        <name>substrate</name>
    </ligand>
</feature>
<feature type="binding site" evidence="2">
    <location>
        <begin position="1280"/>
        <end position="1284"/>
    </location>
    <ligand>
        <name>substrate</name>
    </ligand>
</feature>
<feature type="binding site" evidence="6">
    <location>
        <position position="1316"/>
    </location>
    <ligand>
        <name>Zn(2+)</name>
        <dbReference type="ChEBI" id="CHEBI:29105"/>
        <note>catalytic</note>
    </ligand>
</feature>
<feature type="binding site" evidence="6">
    <location>
        <position position="1320"/>
    </location>
    <ligand>
        <name>Zn(2+)</name>
        <dbReference type="ChEBI" id="CHEBI:29105"/>
        <note>catalytic</note>
    </ligand>
</feature>
<feature type="binding site" evidence="2">
    <location>
        <position position="1339"/>
    </location>
    <ligand>
        <name>Zn(2+)</name>
        <dbReference type="ChEBI" id="CHEBI:29105"/>
        <note>catalytic</note>
    </ligand>
</feature>
<feature type="glycosylation site" description="N-linked (GlcNAc...) asparagine" evidence="5">
    <location>
        <position position="110"/>
    </location>
</feature>
<feature type="glycosylation site" description="N-linked (GlcNAc...) asparagine" evidence="5">
    <location>
        <position position="534"/>
    </location>
</feature>
<feature type="glycosylation site" description="N-linked (GlcNAc...) asparagine" evidence="5">
    <location>
        <position position="581"/>
    </location>
</feature>
<feature type="glycosylation site" description="N-linked (GlcNAc...) asparagine" evidence="5">
    <location>
        <position position="785"/>
    </location>
</feature>
<feature type="glycosylation site" description="N-linked (GlcNAc...) asparagine" evidence="5">
    <location>
        <position position="803"/>
    </location>
</feature>
<feature type="glycosylation site" description="N-linked (GlcNAc...) asparagine" evidence="5">
    <location>
        <position position="914"/>
    </location>
</feature>
<feature type="glycosylation site" description="N-linked (GlcNAc...) asparagine" evidence="5">
    <location>
        <position position="1024"/>
    </location>
</feature>
<feature type="glycosylation site" description="N-linked (GlcNAc...) asparagine" evidence="5">
    <location>
        <position position="1094"/>
    </location>
</feature>
<feature type="glycosylation site" description="N-linked (GlcNAc...) asparagine" evidence="5">
    <location>
        <position position="1245"/>
    </location>
</feature>
<feature type="glycosylation site" description="N-linked (GlcNAc...) asparagine" evidence="5">
    <location>
        <position position="1451"/>
    </location>
</feature>
<feature type="glycosylation site" description="N-linked (GlcNAc...) asparagine" evidence="5">
    <location>
        <position position="1521"/>
    </location>
</feature>
<feature type="glycosylation site" description="N-linked (GlcNAc...) asparagine" evidence="5">
    <location>
        <position position="1826"/>
    </location>
</feature>
<feature type="glycosylation site" description="N-linked (GlcNAc...) asparagine" evidence="5">
    <location>
        <position position="1841"/>
    </location>
</feature>